<dbReference type="EC" id="2.3.1.180" evidence="1"/>
<dbReference type="EMBL" id="CR954253">
    <property type="protein sequence ID" value="CAI97721.1"/>
    <property type="molecule type" value="Genomic_DNA"/>
</dbReference>
<dbReference type="RefSeq" id="WP_011543839.1">
    <property type="nucleotide sequence ID" value="NC_008054.1"/>
</dbReference>
<dbReference type="SMR" id="Q1GAG1"/>
<dbReference type="STRING" id="390333.Ldb0900"/>
<dbReference type="KEGG" id="ldb:Ldb0900"/>
<dbReference type="PATRIC" id="fig|390333.13.peg.1210"/>
<dbReference type="eggNOG" id="COG0332">
    <property type="taxonomic scope" value="Bacteria"/>
</dbReference>
<dbReference type="HOGENOM" id="CLU_039592_4_1_9"/>
<dbReference type="BioCyc" id="LDEL390333:LDB_RS03945-MONOMER"/>
<dbReference type="UniPathway" id="UPA00094"/>
<dbReference type="Proteomes" id="UP000001259">
    <property type="component" value="Chromosome"/>
</dbReference>
<dbReference type="GO" id="GO:0005737">
    <property type="term" value="C:cytoplasm"/>
    <property type="evidence" value="ECO:0007669"/>
    <property type="project" value="UniProtKB-SubCell"/>
</dbReference>
<dbReference type="GO" id="GO:0004315">
    <property type="term" value="F:3-oxoacyl-[acyl-carrier-protein] synthase activity"/>
    <property type="evidence" value="ECO:0007669"/>
    <property type="project" value="InterPro"/>
</dbReference>
<dbReference type="GO" id="GO:0033818">
    <property type="term" value="F:beta-ketoacyl-acyl-carrier-protein synthase III activity"/>
    <property type="evidence" value="ECO:0007669"/>
    <property type="project" value="UniProtKB-UniRule"/>
</dbReference>
<dbReference type="GO" id="GO:0006633">
    <property type="term" value="P:fatty acid biosynthetic process"/>
    <property type="evidence" value="ECO:0007669"/>
    <property type="project" value="UniProtKB-UniRule"/>
</dbReference>
<dbReference type="CDD" id="cd00830">
    <property type="entry name" value="KAS_III"/>
    <property type="match status" value="1"/>
</dbReference>
<dbReference type="Gene3D" id="3.40.47.10">
    <property type="match status" value="1"/>
</dbReference>
<dbReference type="HAMAP" id="MF_01815">
    <property type="entry name" value="FabH"/>
    <property type="match status" value="1"/>
</dbReference>
<dbReference type="InterPro" id="IPR013747">
    <property type="entry name" value="ACP_syn_III_C"/>
</dbReference>
<dbReference type="InterPro" id="IPR013751">
    <property type="entry name" value="ACP_syn_III_N"/>
</dbReference>
<dbReference type="InterPro" id="IPR004655">
    <property type="entry name" value="FabH"/>
</dbReference>
<dbReference type="InterPro" id="IPR016039">
    <property type="entry name" value="Thiolase-like"/>
</dbReference>
<dbReference type="NCBIfam" id="TIGR00747">
    <property type="entry name" value="fabH"/>
    <property type="match status" value="1"/>
</dbReference>
<dbReference type="NCBIfam" id="NF006829">
    <property type="entry name" value="PRK09352.1"/>
    <property type="match status" value="1"/>
</dbReference>
<dbReference type="PANTHER" id="PTHR43091">
    <property type="entry name" value="3-OXOACYL-[ACYL-CARRIER-PROTEIN] SYNTHASE"/>
    <property type="match status" value="1"/>
</dbReference>
<dbReference type="PANTHER" id="PTHR43091:SF1">
    <property type="entry name" value="BETA-KETOACYL-[ACYL-CARRIER-PROTEIN] SYNTHASE III, CHLOROPLASTIC"/>
    <property type="match status" value="1"/>
</dbReference>
<dbReference type="Pfam" id="PF08545">
    <property type="entry name" value="ACP_syn_III"/>
    <property type="match status" value="1"/>
</dbReference>
<dbReference type="Pfam" id="PF08541">
    <property type="entry name" value="ACP_syn_III_C"/>
    <property type="match status" value="1"/>
</dbReference>
<dbReference type="SUPFAM" id="SSF53901">
    <property type="entry name" value="Thiolase-like"/>
    <property type="match status" value="1"/>
</dbReference>
<gene>
    <name evidence="1" type="primary">fabH</name>
    <name type="ordered locus">Ldb0900</name>
</gene>
<sequence>MTYARIAKSSRYLSEFAVSNDDLSQIMETSDEWIKTRTGISSRRISQQENTSDLAIQVAKQLLAGEDPAGVDLIIVATMSPDAYTPATAALVQAAVGAENAACFDLSAACSGFVYALDVAEKMLRRPGGMALVIGAETLSKLVDWQDRTTAVLFGDGAGGVLVKNDALEPHFLASQLKSYGHLAKFLSAGQTSPQPFPGPVTDLAPFKMNGREVYKFATHKVPEVITACLEEAGVGLAEVDLFLLHQANYRIVKQVARRLDLPEEKFPCNIAEYGNTSAASEAILLAELAEEGKAQAGDLVVLAGFGGGLTAAAQLVRL</sequence>
<feature type="chain" id="PRO_1000187872" description="Beta-ketoacyl-[acyl-carrier-protein] synthase III">
    <location>
        <begin position="1"/>
        <end position="319"/>
    </location>
</feature>
<feature type="region of interest" description="ACP-binding" evidence="1">
    <location>
        <begin position="247"/>
        <end position="251"/>
    </location>
</feature>
<feature type="active site" evidence="1">
    <location>
        <position position="110"/>
    </location>
</feature>
<feature type="active site" evidence="1">
    <location>
        <position position="246"/>
    </location>
</feature>
<feature type="active site" evidence="1">
    <location>
        <position position="276"/>
    </location>
</feature>
<keyword id="KW-0012">Acyltransferase</keyword>
<keyword id="KW-0963">Cytoplasm</keyword>
<keyword id="KW-0275">Fatty acid biosynthesis</keyword>
<keyword id="KW-0276">Fatty acid metabolism</keyword>
<keyword id="KW-0444">Lipid biosynthesis</keyword>
<keyword id="KW-0443">Lipid metabolism</keyword>
<keyword id="KW-0511">Multifunctional enzyme</keyword>
<keyword id="KW-1185">Reference proteome</keyword>
<keyword id="KW-0808">Transferase</keyword>
<name>FABH_LACDA</name>
<reference key="1">
    <citation type="journal article" date="2006" name="Proc. Natl. Acad. Sci. U.S.A.">
        <title>The complete genome sequence of Lactobacillus bulgaricus reveals extensive and ongoing reductive evolution.</title>
        <authorList>
            <person name="van de Guchte M."/>
            <person name="Penaud S."/>
            <person name="Grimaldi C."/>
            <person name="Barbe V."/>
            <person name="Bryson K."/>
            <person name="Nicolas P."/>
            <person name="Robert C."/>
            <person name="Oztas S."/>
            <person name="Mangenot S."/>
            <person name="Couloux A."/>
            <person name="Loux V."/>
            <person name="Dervyn R."/>
            <person name="Bossy R."/>
            <person name="Bolotin A."/>
            <person name="Batto J.-M."/>
            <person name="Walunas T."/>
            <person name="Gibrat J.-F."/>
            <person name="Bessieres P."/>
            <person name="Weissenbach J."/>
            <person name="Ehrlich S.D."/>
            <person name="Maguin E."/>
        </authorList>
    </citation>
    <scope>NUCLEOTIDE SEQUENCE [LARGE SCALE GENOMIC DNA]</scope>
    <source>
        <strain>ATCC 11842 / DSM 20081 / BCRC 10696 / JCM 1002 / NBRC 13953 / NCIMB 11778 / NCTC 12712 / WDCM 00102 / Lb 14</strain>
    </source>
</reference>
<evidence type="ECO:0000255" key="1">
    <source>
        <dbReference type="HAMAP-Rule" id="MF_01815"/>
    </source>
</evidence>
<comment type="function">
    <text evidence="1">Catalyzes the condensation reaction of fatty acid synthesis by the addition to an acyl acceptor of two carbons from malonyl-ACP. Catalyzes the first condensation reaction which initiates fatty acid synthesis and may therefore play a role in governing the total rate of fatty acid production. Possesses both acetoacetyl-ACP synthase and acetyl transacylase activities. Its substrate specificity determines the biosynthesis of branched-chain and/or straight-chain of fatty acids.</text>
</comment>
<comment type="catalytic activity">
    <reaction evidence="1">
        <text>malonyl-[ACP] + acetyl-CoA + H(+) = 3-oxobutanoyl-[ACP] + CO2 + CoA</text>
        <dbReference type="Rhea" id="RHEA:12080"/>
        <dbReference type="Rhea" id="RHEA-COMP:9623"/>
        <dbReference type="Rhea" id="RHEA-COMP:9625"/>
        <dbReference type="ChEBI" id="CHEBI:15378"/>
        <dbReference type="ChEBI" id="CHEBI:16526"/>
        <dbReference type="ChEBI" id="CHEBI:57287"/>
        <dbReference type="ChEBI" id="CHEBI:57288"/>
        <dbReference type="ChEBI" id="CHEBI:78449"/>
        <dbReference type="ChEBI" id="CHEBI:78450"/>
        <dbReference type="EC" id="2.3.1.180"/>
    </reaction>
</comment>
<comment type="pathway">
    <text evidence="1">Lipid metabolism; fatty acid biosynthesis.</text>
</comment>
<comment type="subunit">
    <text evidence="1">Homodimer.</text>
</comment>
<comment type="subcellular location">
    <subcellularLocation>
        <location evidence="1">Cytoplasm</location>
    </subcellularLocation>
</comment>
<comment type="domain">
    <text evidence="1">The last Arg residue of the ACP-binding site is essential for the weak association between ACP/AcpP and FabH.</text>
</comment>
<comment type="similarity">
    <text evidence="1">Belongs to the thiolase-like superfamily. FabH family.</text>
</comment>
<proteinExistence type="inferred from homology"/>
<protein>
    <recommendedName>
        <fullName evidence="1">Beta-ketoacyl-[acyl-carrier-protein] synthase III</fullName>
        <shortName evidence="1">Beta-ketoacyl-ACP synthase III</shortName>
        <shortName evidence="1">KAS III</shortName>
        <ecNumber evidence="1">2.3.1.180</ecNumber>
    </recommendedName>
    <alternativeName>
        <fullName evidence="1">3-oxoacyl-[acyl-carrier-protein] synthase 3</fullName>
    </alternativeName>
    <alternativeName>
        <fullName evidence="1">3-oxoacyl-[acyl-carrier-protein] synthase III</fullName>
    </alternativeName>
</protein>
<organism>
    <name type="scientific">Lactobacillus delbrueckii subsp. bulgaricus (strain ATCC 11842 / DSM 20081 / BCRC 10696 / JCM 1002 / NBRC 13953 / NCIMB 11778 / NCTC 12712 / WDCM 00102 / Lb 14)</name>
    <dbReference type="NCBI Taxonomy" id="390333"/>
    <lineage>
        <taxon>Bacteria</taxon>
        <taxon>Bacillati</taxon>
        <taxon>Bacillota</taxon>
        <taxon>Bacilli</taxon>
        <taxon>Lactobacillales</taxon>
        <taxon>Lactobacillaceae</taxon>
        <taxon>Lactobacillus</taxon>
    </lineage>
</organism>
<accession>Q1GAG1</accession>